<sequence length="84" mass="9858">MLRSIMRRFKSTNNLSKKPSDYYVVLCPKCYFVTSAEVSVAEYIEMHKNFNTKFADRCPNDFIVTNSKSWNNHENCSALFYPLC</sequence>
<feature type="chain" id="PRO_0000132991" description="Uncharacterized 9.9 kDa protein in LEF8-FP intergenic region">
    <location>
        <begin position="1"/>
        <end position="84"/>
    </location>
</feature>
<accession>P41460</accession>
<protein>
    <recommendedName>
        <fullName>Uncharacterized 9.9 kDa protein in LEF8-FP intergenic region</fullName>
    </recommendedName>
</protein>
<proteinExistence type="predicted"/>
<organismHost>
    <name type="scientific">Lepidoptera</name>
    <name type="common">butterflies and moths</name>
    <dbReference type="NCBI Taxonomy" id="7088"/>
</organismHost>
<dbReference type="EMBL" id="L22858">
    <property type="protein sequence ID" value="AAA66686.1"/>
    <property type="molecule type" value="Genomic_DNA"/>
</dbReference>
<dbReference type="PIR" id="A72857">
    <property type="entry name" value="A72857"/>
</dbReference>
<dbReference type="RefSeq" id="NP_054086.1">
    <property type="nucleotide sequence ID" value="NC_001623.1"/>
</dbReference>
<dbReference type="GeneID" id="1403889"/>
<dbReference type="KEGG" id="vg:1403889"/>
<dbReference type="OrthoDB" id="19806at10239"/>
<dbReference type="Proteomes" id="UP000008292">
    <property type="component" value="Segment"/>
</dbReference>
<dbReference type="InterPro" id="IPR020122">
    <property type="entry name" value="Alphabaculovirus_Y056"/>
</dbReference>
<dbReference type="Pfam" id="PF10891">
    <property type="entry name" value="DUF2719"/>
    <property type="match status" value="1"/>
</dbReference>
<name>Y056_NPVAC</name>
<reference key="1">
    <citation type="journal article" date="1994" name="Virology">
        <title>The complete DNA sequence of Autographa californica nuclear polyhedrosis virus.</title>
        <authorList>
            <person name="Ayres M.D."/>
            <person name="Howard S.C."/>
            <person name="Kuzio J."/>
            <person name="Lopez-Ferber M."/>
            <person name="Possee R.D."/>
        </authorList>
    </citation>
    <scope>NUCLEOTIDE SEQUENCE [LARGE SCALE GENOMIC DNA]</scope>
    <source>
        <strain>C6</strain>
    </source>
</reference>
<organism>
    <name type="scientific">Autographa californica nuclear polyhedrosis virus</name>
    <name type="common">AcMNPV</name>
    <dbReference type="NCBI Taxonomy" id="46015"/>
    <lineage>
        <taxon>Viruses</taxon>
        <taxon>Viruses incertae sedis</taxon>
        <taxon>Naldaviricetes</taxon>
        <taxon>Lefavirales</taxon>
        <taxon>Baculoviridae</taxon>
        <taxon>Alphabaculovirus</taxon>
        <taxon>Alphabaculovirus aucalifornicae</taxon>
    </lineage>
</organism>
<keyword id="KW-1185">Reference proteome</keyword>